<name>FOLD3_RHIWR</name>
<evidence type="ECO:0000255" key="1">
    <source>
        <dbReference type="HAMAP-Rule" id="MF_01576"/>
    </source>
</evidence>
<gene>
    <name evidence="1" type="primary">folD3</name>
    <name type="ordered locus">Swit_2872</name>
</gene>
<proteinExistence type="inferred from homology"/>
<reference key="1">
    <citation type="journal article" date="2010" name="J. Bacteriol.">
        <title>Genome sequence of the dioxin-mineralizing bacterium Sphingomonas wittichii RW1.</title>
        <authorList>
            <person name="Miller T.R."/>
            <person name="Delcher A.L."/>
            <person name="Salzberg S.L."/>
            <person name="Saunders E."/>
            <person name="Detter J.C."/>
            <person name="Halden R.U."/>
        </authorList>
    </citation>
    <scope>NUCLEOTIDE SEQUENCE [LARGE SCALE GENOMIC DNA]</scope>
    <source>
        <strain>DSM 6014 / CCUG 31198 / JCM 15750 / NBRC 105917 / EY 4224 / RW1</strain>
    </source>
</reference>
<protein>
    <recommendedName>
        <fullName evidence="1">Bifunctional protein FolD 3</fullName>
    </recommendedName>
    <domain>
        <recommendedName>
            <fullName evidence="1">Methylenetetrahydrofolate dehydrogenase</fullName>
            <ecNumber evidence="1">1.5.1.5</ecNumber>
        </recommendedName>
    </domain>
    <domain>
        <recommendedName>
            <fullName evidence="1">Methenyltetrahydrofolate cyclohydrolase</fullName>
            <ecNumber evidence="1">3.5.4.9</ecNumber>
        </recommendedName>
    </domain>
</protein>
<comment type="function">
    <text evidence="1">Catalyzes the oxidation of 5,10-methylenetetrahydrofolate to 5,10-methenyltetrahydrofolate and then the hydrolysis of 5,10-methenyltetrahydrofolate to 10-formyltetrahydrofolate.</text>
</comment>
<comment type="catalytic activity">
    <reaction evidence="1">
        <text>(6R)-5,10-methylene-5,6,7,8-tetrahydrofolate + NADP(+) = (6R)-5,10-methenyltetrahydrofolate + NADPH</text>
        <dbReference type="Rhea" id="RHEA:22812"/>
        <dbReference type="ChEBI" id="CHEBI:15636"/>
        <dbReference type="ChEBI" id="CHEBI:57455"/>
        <dbReference type="ChEBI" id="CHEBI:57783"/>
        <dbReference type="ChEBI" id="CHEBI:58349"/>
        <dbReference type="EC" id="1.5.1.5"/>
    </reaction>
</comment>
<comment type="catalytic activity">
    <reaction evidence="1">
        <text>(6R)-5,10-methenyltetrahydrofolate + H2O = (6R)-10-formyltetrahydrofolate + H(+)</text>
        <dbReference type="Rhea" id="RHEA:23700"/>
        <dbReference type="ChEBI" id="CHEBI:15377"/>
        <dbReference type="ChEBI" id="CHEBI:15378"/>
        <dbReference type="ChEBI" id="CHEBI:57455"/>
        <dbReference type="ChEBI" id="CHEBI:195366"/>
        <dbReference type="EC" id="3.5.4.9"/>
    </reaction>
</comment>
<comment type="pathway">
    <text evidence="1">One-carbon metabolism; tetrahydrofolate interconversion.</text>
</comment>
<comment type="subunit">
    <text evidence="1">Homodimer.</text>
</comment>
<comment type="similarity">
    <text evidence="1">Belongs to the tetrahydrofolate dehydrogenase/cyclohydrolase family.</text>
</comment>
<accession>A5VAA8</accession>
<sequence length="304" mass="31569">MERVGMNGAEIIDGKAYAAGLRARVATAVPAFRVAAGRAPGLAVVLVGEDAASQVYVRSKHKATVEAGMESFEHRLPATASETELLALVERLNADDRVDGILVQLPLPPHIDEKKVIATIDPDKDVDGFHVVNAGRLAVGEAGYVPCTPLGCLMLLKDRRGDLSGLEAVVIGRSNIVGKPMAALLLAENCTVTIAHSRTRDLAEVVRRADIVVAAVGRPEMVRGDWIRPGATVIDVGINRVPGAEPGKTRLVGDVAFAEAAAVAGAITPVPGGVGPMTIAVLLRNTLVAAHRRAGVALPEGAIG</sequence>
<organism>
    <name type="scientific">Rhizorhabdus wittichii (strain DSM 6014 / CCUG 31198 / JCM 15750 / NBRC 105917 / EY 4224 / RW1)</name>
    <name type="common">Sphingomonas wittichii</name>
    <dbReference type="NCBI Taxonomy" id="392499"/>
    <lineage>
        <taxon>Bacteria</taxon>
        <taxon>Pseudomonadati</taxon>
        <taxon>Pseudomonadota</taxon>
        <taxon>Alphaproteobacteria</taxon>
        <taxon>Sphingomonadales</taxon>
        <taxon>Sphingomonadaceae</taxon>
        <taxon>Rhizorhabdus</taxon>
    </lineage>
</organism>
<feature type="chain" id="PRO_0000340601" description="Bifunctional protein FolD 3">
    <location>
        <begin position="1"/>
        <end position="304"/>
    </location>
</feature>
<feature type="binding site" evidence="1">
    <location>
        <begin position="172"/>
        <end position="174"/>
    </location>
    <ligand>
        <name>NADP(+)</name>
        <dbReference type="ChEBI" id="CHEBI:58349"/>
    </ligand>
</feature>
<feature type="binding site" evidence="1">
    <location>
        <position position="197"/>
    </location>
    <ligand>
        <name>NADP(+)</name>
        <dbReference type="ChEBI" id="CHEBI:58349"/>
    </ligand>
</feature>
<feature type="binding site" evidence="1">
    <location>
        <position position="238"/>
    </location>
    <ligand>
        <name>NADP(+)</name>
        <dbReference type="ChEBI" id="CHEBI:58349"/>
    </ligand>
</feature>
<dbReference type="EC" id="1.5.1.5" evidence="1"/>
<dbReference type="EC" id="3.5.4.9" evidence="1"/>
<dbReference type="EMBL" id="CP000699">
    <property type="protein sequence ID" value="ABQ69224.1"/>
    <property type="molecule type" value="Genomic_DNA"/>
</dbReference>
<dbReference type="SMR" id="A5VAA8"/>
<dbReference type="STRING" id="392499.Swit_2872"/>
<dbReference type="PaxDb" id="392499-Swit_2872"/>
<dbReference type="KEGG" id="swi:Swit_2872"/>
<dbReference type="eggNOG" id="COG0190">
    <property type="taxonomic scope" value="Bacteria"/>
</dbReference>
<dbReference type="HOGENOM" id="CLU_034045_2_1_5"/>
<dbReference type="OrthoDB" id="9803580at2"/>
<dbReference type="UniPathway" id="UPA00193"/>
<dbReference type="Proteomes" id="UP000001989">
    <property type="component" value="Chromosome"/>
</dbReference>
<dbReference type="GO" id="GO:0005829">
    <property type="term" value="C:cytosol"/>
    <property type="evidence" value="ECO:0007669"/>
    <property type="project" value="TreeGrafter"/>
</dbReference>
<dbReference type="GO" id="GO:0004477">
    <property type="term" value="F:methenyltetrahydrofolate cyclohydrolase activity"/>
    <property type="evidence" value="ECO:0007669"/>
    <property type="project" value="UniProtKB-UniRule"/>
</dbReference>
<dbReference type="GO" id="GO:0004488">
    <property type="term" value="F:methylenetetrahydrofolate dehydrogenase (NADP+) activity"/>
    <property type="evidence" value="ECO:0007669"/>
    <property type="project" value="UniProtKB-UniRule"/>
</dbReference>
<dbReference type="GO" id="GO:0000105">
    <property type="term" value="P:L-histidine biosynthetic process"/>
    <property type="evidence" value="ECO:0007669"/>
    <property type="project" value="UniProtKB-KW"/>
</dbReference>
<dbReference type="GO" id="GO:0009086">
    <property type="term" value="P:methionine biosynthetic process"/>
    <property type="evidence" value="ECO:0007669"/>
    <property type="project" value="UniProtKB-KW"/>
</dbReference>
<dbReference type="GO" id="GO:0006164">
    <property type="term" value="P:purine nucleotide biosynthetic process"/>
    <property type="evidence" value="ECO:0007669"/>
    <property type="project" value="UniProtKB-KW"/>
</dbReference>
<dbReference type="GO" id="GO:0035999">
    <property type="term" value="P:tetrahydrofolate interconversion"/>
    <property type="evidence" value="ECO:0007669"/>
    <property type="project" value="UniProtKB-UniRule"/>
</dbReference>
<dbReference type="CDD" id="cd01080">
    <property type="entry name" value="NAD_bind_m-THF_DH_Cyclohyd"/>
    <property type="match status" value="1"/>
</dbReference>
<dbReference type="FunFam" id="3.40.50.720:FF:000006">
    <property type="entry name" value="Bifunctional protein FolD"/>
    <property type="match status" value="1"/>
</dbReference>
<dbReference type="FunFam" id="3.40.50.10860:FF:000005">
    <property type="entry name" value="C-1-tetrahydrofolate synthase, cytoplasmic, putative"/>
    <property type="match status" value="1"/>
</dbReference>
<dbReference type="Gene3D" id="3.40.50.10860">
    <property type="entry name" value="Leucine Dehydrogenase, chain A, domain 1"/>
    <property type="match status" value="1"/>
</dbReference>
<dbReference type="Gene3D" id="3.40.50.720">
    <property type="entry name" value="NAD(P)-binding Rossmann-like Domain"/>
    <property type="match status" value="1"/>
</dbReference>
<dbReference type="HAMAP" id="MF_01576">
    <property type="entry name" value="THF_DHG_CYH"/>
    <property type="match status" value="1"/>
</dbReference>
<dbReference type="InterPro" id="IPR046346">
    <property type="entry name" value="Aminoacid_DH-like_N_sf"/>
</dbReference>
<dbReference type="InterPro" id="IPR036291">
    <property type="entry name" value="NAD(P)-bd_dom_sf"/>
</dbReference>
<dbReference type="InterPro" id="IPR000672">
    <property type="entry name" value="THF_DH/CycHdrlase"/>
</dbReference>
<dbReference type="InterPro" id="IPR020630">
    <property type="entry name" value="THF_DH/CycHdrlase_cat_dom"/>
</dbReference>
<dbReference type="InterPro" id="IPR020867">
    <property type="entry name" value="THF_DH/CycHdrlase_CS"/>
</dbReference>
<dbReference type="InterPro" id="IPR020631">
    <property type="entry name" value="THF_DH/CycHdrlase_NAD-bd_dom"/>
</dbReference>
<dbReference type="NCBIfam" id="NF008058">
    <property type="entry name" value="PRK10792.1"/>
    <property type="match status" value="1"/>
</dbReference>
<dbReference type="NCBIfam" id="NF010783">
    <property type="entry name" value="PRK14186.1"/>
    <property type="match status" value="1"/>
</dbReference>
<dbReference type="NCBIfam" id="NF010785">
    <property type="entry name" value="PRK14188.1"/>
    <property type="match status" value="1"/>
</dbReference>
<dbReference type="PANTHER" id="PTHR48099:SF5">
    <property type="entry name" value="C-1-TETRAHYDROFOLATE SYNTHASE, CYTOPLASMIC"/>
    <property type="match status" value="1"/>
</dbReference>
<dbReference type="PANTHER" id="PTHR48099">
    <property type="entry name" value="C-1-TETRAHYDROFOLATE SYNTHASE, CYTOPLASMIC-RELATED"/>
    <property type="match status" value="1"/>
</dbReference>
<dbReference type="Pfam" id="PF00763">
    <property type="entry name" value="THF_DHG_CYH"/>
    <property type="match status" value="1"/>
</dbReference>
<dbReference type="Pfam" id="PF02882">
    <property type="entry name" value="THF_DHG_CYH_C"/>
    <property type="match status" value="1"/>
</dbReference>
<dbReference type="PRINTS" id="PR00085">
    <property type="entry name" value="THFDHDRGNASE"/>
</dbReference>
<dbReference type="SUPFAM" id="SSF53223">
    <property type="entry name" value="Aminoacid dehydrogenase-like, N-terminal domain"/>
    <property type="match status" value="1"/>
</dbReference>
<dbReference type="SUPFAM" id="SSF51735">
    <property type="entry name" value="NAD(P)-binding Rossmann-fold domains"/>
    <property type="match status" value="1"/>
</dbReference>
<dbReference type="PROSITE" id="PS00766">
    <property type="entry name" value="THF_DHG_CYH_1"/>
    <property type="match status" value="1"/>
</dbReference>
<dbReference type="PROSITE" id="PS00767">
    <property type="entry name" value="THF_DHG_CYH_2"/>
    <property type="match status" value="1"/>
</dbReference>
<keyword id="KW-0028">Amino-acid biosynthesis</keyword>
<keyword id="KW-0368">Histidine biosynthesis</keyword>
<keyword id="KW-0378">Hydrolase</keyword>
<keyword id="KW-0486">Methionine biosynthesis</keyword>
<keyword id="KW-0511">Multifunctional enzyme</keyword>
<keyword id="KW-0521">NADP</keyword>
<keyword id="KW-0554">One-carbon metabolism</keyword>
<keyword id="KW-0560">Oxidoreductase</keyword>
<keyword id="KW-0658">Purine biosynthesis</keyword>
<keyword id="KW-1185">Reference proteome</keyword>